<keyword id="KW-0496">Mitochondrion</keyword>
<keyword id="KW-1185">Reference proteome</keyword>
<keyword id="KW-0687">Ribonucleoprotein</keyword>
<keyword id="KW-0689">Ribosomal protein</keyword>
<keyword id="KW-0809">Transit peptide</keyword>
<reference key="1">
    <citation type="journal article" date="2005" name="Science">
        <title>The transcriptional landscape of the mammalian genome.</title>
        <authorList>
            <person name="Carninci P."/>
            <person name="Kasukawa T."/>
            <person name="Katayama S."/>
            <person name="Gough J."/>
            <person name="Frith M.C."/>
            <person name="Maeda N."/>
            <person name="Oyama R."/>
            <person name="Ravasi T."/>
            <person name="Lenhard B."/>
            <person name="Wells C."/>
            <person name="Kodzius R."/>
            <person name="Shimokawa K."/>
            <person name="Bajic V.B."/>
            <person name="Brenner S.E."/>
            <person name="Batalov S."/>
            <person name="Forrest A.R."/>
            <person name="Zavolan M."/>
            <person name="Davis M.J."/>
            <person name="Wilming L.G."/>
            <person name="Aidinis V."/>
            <person name="Allen J.E."/>
            <person name="Ambesi-Impiombato A."/>
            <person name="Apweiler R."/>
            <person name="Aturaliya R.N."/>
            <person name="Bailey T.L."/>
            <person name="Bansal M."/>
            <person name="Baxter L."/>
            <person name="Beisel K.W."/>
            <person name="Bersano T."/>
            <person name="Bono H."/>
            <person name="Chalk A.M."/>
            <person name="Chiu K.P."/>
            <person name="Choudhary V."/>
            <person name="Christoffels A."/>
            <person name="Clutterbuck D.R."/>
            <person name="Crowe M.L."/>
            <person name="Dalla E."/>
            <person name="Dalrymple B.P."/>
            <person name="de Bono B."/>
            <person name="Della Gatta G."/>
            <person name="di Bernardo D."/>
            <person name="Down T."/>
            <person name="Engstrom P."/>
            <person name="Fagiolini M."/>
            <person name="Faulkner G."/>
            <person name="Fletcher C.F."/>
            <person name="Fukushima T."/>
            <person name="Furuno M."/>
            <person name="Futaki S."/>
            <person name="Gariboldi M."/>
            <person name="Georgii-Hemming P."/>
            <person name="Gingeras T.R."/>
            <person name="Gojobori T."/>
            <person name="Green R.E."/>
            <person name="Gustincich S."/>
            <person name="Harbers M."/>
            <person name="Hayashi Y."/>
            <person name="Hensch T.K."/>
            <person name="Hirokawa N."/>
            <person name="Hill D."/>
            <person name="Huminiecki L."/>
            <person name="Iacono M."/>
            <person name="Ikeo K."/>
            <person name="Iwama A."/>
            <person name="Ishikawa T."/>
            <person name="Jakt M."/>
            <person name="Kanapin A."/>
            <person name="Katoh M."/>
            <person name="Kawasawa Y."/>
            <person name="Kelso J."/>
            <person name="Kitamura H."/>
            <person name="Kitano H."/>
            <person name="Kollias G."/>
            <person name="Krishnan S.P."/>
            <person name="Kruger A."/>
            <person name="Kummerfeld S.K."/>
            <person name="Kurochkin I.V."/>
            <person name="Lareau L.F."/>
            <person name="Lazarevic D."/>
            <person name="Lipovich L."/>
            <person name="Liu J."/>
            <person name="Liuni S."/>
            <person name="McWilliam S."/>
            <person name="Madan Babu M."/>
            <person name="Madera M."/>
            <person name="Marchionni L."/>
            <person name="Matsuda H."/>
            <person name="Matsuzawa S."/>
            <person name="Miki H."/>
            <person name="Mignone F."/>
            <person name="Miyake S."/>
            <person name="Morris K."/>
            <person name="Mottagui-Tabar S."/>
            <person name="Mulder N."/>
            <person name="Nakano N."/>
            <person name="Nakauchi H."/>
            <person name="Ng P."/>
            <person name="Nilsson R."/>
            <person name="Nishiguchi S."/>
            <person name="Nishikawa S."/>
            <person name="Nori F."/>
            <person name="Ohara O."/>
            <person name="Okazaki Y."/>
            <person name="Orlando V."/>
            <person name="Pang K.C."/>
            <person name="Pavan W.J."/>
            <person name="Pavesi G."/>
            <person name="Pesole G."/>
            <person name="Petrovsky N."/>
            <person name="Piazza S."/>
            <person name="Reed J."/>
            <person name="Reid J.F."/>
            <person name="Ring B.Z."/>
            <person name="Ringwald M."/>
            <person name="Rost B."/>
            <person name="Ruan Y."/>
            <person name="Salzberg S.L."/>
            <person name="Sandelin A."/>
            <person name="Schneider C."/>
            <person name="Schoenbach C."/>
            <person name="Sekiguchi K."/>
            <person name="Semple C.A."/>
            <person name="Seno S."/>
            <person name="Sessa L."/>
            <person name="Sheng Y."/>
            <person name="Shibata Y."/>
            <person name="Shimada H."/>
            <person name="Shimada K."/>
            <person name="Silva D."/>
            <person name="Sinclair B."/>
            <person name="Sperling S."/>
            <person name="Stupka E."/>
            <person name="Sugiura K."/>
            <person name="Sultana R."/>
            <person name="Takenaka Y."/>
            <person name="Taki K."/>
            <person name="Tammoja K."/>
            <person name="Tan S.L."/>
            <person name="Tang S."/>
            <person name="Taylor M.S."/>
            <person name="Tegner J."/>
            <person name="Teichmann S.A."/>
            <person name="Ueda H.R."/>
            <person name="van Nimwegen E."/>
            <person name="Verardo R."/>
            <person name="Wei C.L."/>
            <person name="Yagi K."/>
            <person name="Yamanishi H."/>
            <person name="Zabarovsky E."/>
            <person name="Zhu S."/>
            <person name="Zimmer A."/>
            <person name="Hide W."/>
            <person name="Bult C."/>
            <person name="Grimmond S.M."/>
            <person name="Teasdale R.D."/>
            <person name="Liu E.T."/>
            <person name="Brusic V."/>
            <person name="Quackenbush J."/>
            <person name="Wahlestedt C."/>
            <person name="Mattick J.S."/>
            <person name="Hume D.A."/>
            <person name="Kai C."/>
            <person name="Sasaki D."/>
            <person name="Tomaru Y."/>
            <person name="Fukuda S."/>
            <person name="Kanamori-Katayama M."/>
            <person name="Suzuki M."/>
            <person name="Aoki J."/>
            <person name="Arakawa T."/>
            <person name="Iida J."/>
            <person name="Imamura K."/>
            <person name="Itoh M."/>
            <person name="Kato T."/>
            <person name="Kawaji H."/>
            <person name="Kawagashira N."/>
            <person name="Kawashima T."/>
            <person name="Kojima M."/>
            <person name="Kondo S."/>
            <person name="Konno H."/>
            <person name="Nakano K."/>
            <person name="Ninomiya N."/>
            <person name="Nishio T."/>
            <person name="Okada M."/>
            <person name="Plessy C."/>
            <person name="Shibata K."/>
            <person name="Shiraki T."/>
            <person name="Suzuki S."/>
            <person name="Tagami M."/>
            <person name="Waki K."/>
            <person name="Watahiki A."/>
            <person name="Okamura-Oho Y."/>
            <person name="Suzuki H."/>
            <person name="Kawai J."/>
            <person name="Hayashizaki Y."/>
        </authorList>
    </citation>
    <scope>NUCLEOTIDE SEQUENCE [LARGE SCALE MRNA]</scope>
    <source>
        <strain>C57BL/6J</strain>
        <tissue>Embryo</tissue>
        <tissue>Eye</tissue>
        <tissue>Lung</tissue>
    </source>
</reference>
<reference key="2">
    <citation type="journal article" date="2009" name="PLoS Biol.">
        <title>Lineage-specific biology revealed by a finished genome assembly of the mouse.</title>
        <authorList>
            <person name="Church D.M."/>
            <person name="Goodstadt L."/>
            <person name="Hillier L.W."/>
            <person name="Zody M.C."/>
            <person name="Goldstein S."/>
            <person name="She X."/>
            <person name="Bult C.J."/>
            <person name="Agarwala R."/>
            <person name="Cherry J.L."/>
            <person name="DiCuccio M."/>
            <person name="Hlavina W."/>
            <person name="Kapustin Y."/>
            <person name="Meric P."/>
            <person name="Maglott D."/>
            <person name="Birtle Z."/>
            <person name="Marques A.C."/>
            <person name="Graves T."/>
            <person name="Zhou S."/>
            <person name="Teague B."/>
            <person name="Potamousis K."/>
            <person name="Churas C."/>
            <person name="Place M."/>
            <person name="Herschleb J."/>
            <person name="Runnheim R."/>
            <person name="Forrest D."/>
            <person name="Amos-Landgraf J."/>
            <person name="Schwartz D.C."/>
            <person name="Cheng Z."/>
            <person name="Lindblad-Toh K."/>
            <person name="Eichler E.E."/>
            <person name="Ponting C.P."/>
        </authorList>
    </citation>
    <scope>NUCLEOTIDE SEQUENCE [LARGE SCALE GENOMIC DNA]</scope>
    <source>
        <strain>C57BL/6J</strain>
    </source>
</reference>
<reference key="3">
    <citation type="journal article" date="2004" name="Genome Res.">
        <title>The status, quality, and expansion of the NIH full-length cDNA project: the Mammalian Gene Collection (MGC).</title>
        <authorList>
            <consortium name="The MGC Project Team"/>
        </authorList>
    </citation>
    <scope>NUCLEOTIDE SEQUENCE [LARGE SCALE MRNA]</scope>
    <source>
        <tissue>Testis</tissue>
    </source>
</reference>
<reference key="4">
    <citation type="journal article" date="2010" name="Cell">
        <title>A tissue-specific atlas of mouse protein phosphorylation and expression.</title>
        <authorList>
            <person name="Huttlin E.L."/>
            <person name="Jedrychowski M.P."/>
            <person name="Elias J.E."/>
            <person name="Goswami T."/>
            <person name="Rad R."/>
            <person name="Beausoleil S.A."/>
            <person name="Villen J."/>
            <person name="Haas W."/>
            <person name="Sowa M.E."/>
            <person name="Gygi S.P."/>
        </authorList>
    </citation>
    <scope>IDENTIFICATION BY MASS SPECTROMETRY [LARGE SCALE ANALYSIS]</scope>
    <source>
        <tissue>Brain</tissue>
        <tissue>Brown adipose tissue</tissue>
        <tissue>Heart</tissue>
        <tissue>Kidney</tissue>
        <tissue>Liver</tissue>
        <tissue>Lung</tissue>
        <tissue>Spleen</tissue>
        <tissue>Testis</tissue>
    </source>
</reference>
<name>RM22_MOUSE</name>
<organism>
    <name type="scientific">Mus musculus</name>
    <name type="common">Mouse</name>
    <dbReference type="NCBI Taxonomy" id="10090"/>
    <lineage>
        <taxon>Eukaryota</taxon>
        <taxon>Metazoa</taxon>
        <taxon>Chordata</taxon>
        <taxon>Craniata</taxon>
        <taxon>Vertebrata</taxon>
        <taxon>Euteleostomi</taxon>
        <taxon>Mammalia</taxon>
        <taxon>Eutheria</taxon>
        <taxon>Euarchontoglires</taxon>
        <taxon>Glires</taxon>
        <taxon>Rodentia</taxon>
        <taxon>Myomorpha</taxon>
        <taxon>Muroidea</taxon>
        <taxon>Muridae</taxon>
        <taxon>Murinae</taxon>
        <taxon>Mus</taxon>
        <taxon>Mus</taxon>
    </lineage>
</organism>
<gene>
    <name type="primary">Mrpl22</name>
</gene>
<dbReference type="EMBL" id="AK077615">
    <property type="protein sequence ID" value="BAC36901.1"/>
    <property type="molecule type" value="mRNA"/>
</dbReference>
<dbReference type="EMBL" id="AK086913">
    <property type="protein sequence ID" value="BAC39761.1"/>
    <property type="molecule type" value="mRNA"/>
</dbReference>
<dbReference type="EMBL" id="AK164417">
    <property type="protein sequence ID" value="BAE37779.1"/>
    <property type="molecule type" value="mRNA"/>
</dbReference>
<dbReference type="EMBL" id="AL928857">
    <property type="status" value="NOT_ANNOTATED_CDS"/>
    <property type="molecule type" value="Genomic_DNA"/>
</dbReference>
<dbReference type="EMBL" id="BC061191">
    <property type="protein sequence ID" value="AAH61191.1"/>
    <property type="molecule type" value="mRNA"/>
</dbReference>
<dbReference type="CCDS" id="CCDS24724.1"/>
<dbReference type="RefSeq" id="NP_001390902.1">
    <property type="nucleotide sequence ID" value="NM_001403973.1"/>
</dbReference>
<dbReference type="RefSeq" id="NP_778166.2">
    <property type="nucleotide sequence ID" value="NM_175001.5"/>
</dbReference>
<dbReference type="SMR" id="Q8BU88"/>
<dbReference type="BioGRID" id="229782">
    <property type="interactions" value="3"/>
</dbReference>
<dbReference type="ComplexPortal" id="CPX-5302">
    <property type="entry name" value="39S mitochondrial large ribosomal subunit"/>
</dbReference>
<dbReference type="FunCoup" id="Q8BU88">
    <property type="interactions" value="2036"/>
</dbReference>
<dbReference type="IntAct" id="Q8BU88">
    <property type="interactions" value="1"/>
</dbReference>
<dbReference type="STRING" id="10090.ENSMUSP00000020820"/>
<dbReference type="iPTMnet" id="Q8BU88"/>
<dbReference type="PhosphoSitePlus" id="Q8BU88"/>
<dbReference type="SwissPalm" id="Q8BU88"/>
<dbReference type="jPOST" id="Q8BU88"/>
<dbReference type="PaxDb" id="10090-ENSMUSP00000020820"/>
<dbReference type="PeptideAtlas" id="Q8BU88"/>
<dbReference type="ProteomicsDB" id="299859"/>
<dbReference type="Pumba" id="Q8BU88"/>
<dbReference type="Antibodypedia" id="28351">
    <property type="antibodies" value="112 antibodies from 18 providers"/>
</dbReference>
<dbReference type="DNASU" id="216767"/>
<dbReference type="Ensembl" id="ENSMUST00000020820.2">
    <property type="protein sequence ID" value="ENSMUSP00000020820.2"/>
    <property type="gene ID" value="ENSMUSG00000020514.9"/>
</dbReference>
<dbReference type="GeneID" id="216767"/>
<dbReference type="KEGG" id="mmu:216767"/>
<dbReference type="UCSC" id="uc007jap.3">
    <property type="organism name" value="mouse"/>
</dbReference>
<dbReference type="AGR" id="MGI:1333794"/>
<dbReference type="CTD" id="29093"/>
<dbReference type="MGI" id="MGI:1333794">
    <property type="gene designation" value="Mrpl22"/>
</dbReference>
<dbReference type="VEuPathDB" id="HostDB:ENSMUSG00000020514"/>
<dbReference type="eggNOG" id="KOG1711">
    <property type="taxonomic scope" value="Eukaryota"/>
</dbReference>
<dbReference type="GeneTree" id="ENSGT00390000002110"/>
<dbReference type="HOGENOM" id="CLU_100005_1_0_1"/>
<dbReference type="InParanoid" id="Q8BU88"/>
<dbReference type="OMA" id="HKVIRQM"/>
<dbReference type="OrthoDB" id="416470at2759"/>
<dbReference type="PhylomeDB" id="Q8BU88"/>
<dbReference type="TreeFam" id="TF315111"/>
<dbReference type="Reactome" id="R-MMU-5389840">
    <property type="pathway name" value="Mitochondrial translation elongation"/>
</dbReference>
<dbReference type="Reactome" id="R-MMU-5419276">
    <property type="pathway name" value="Mitochondrial translation termination"/>
</dbReference>
<dbReference type="BioGRID-ORCS" id="216767">
    <property type="hits" value="25 hits in 81 CRISPR screens"/>
</dbReference>
<dbReference type="ChiTaRS" id="Mrpl22">
    <property type="organism name" value="mouse"/>
</dbReference>
<dbReference type="PRO" id="PR:Q8BU88"/>
<dbReference type="Proteomes" id="UP000000589">
    <property type="component" value="Chromosome 11"/>
</dbReference>
<dbReference type="RNAct" id="Q8BU88">
    <property type="molecule type" value="protein"/>
</dbReference>
<dbReference type="Bgee" id="ENSMUSG00000020514">
    <property type="expression patterns" value="Expressed in blastoderm cell in morula and 64 other cell types or tissues"/>
</dbReference>
<dbReference type="GO" id="GO:0005743">
    <property type="term" value="C:mitochondrial inner membrane"/>
    <property type="evidence" value="ECO:0000303"/>
    <property type="project" value="ComplexPortal"/>
</dbReference>
<dbReference type="GO" id="GO:0005762">
    <property type="term" value="C:mitochondrial large ribosomal subunit"/>
    <property type="evidence" value="ECO:0000250"/>
    <property type="project" value="UniProtKB"/>
</dbReference>
<dbReference type="GO" id="GO:0005739">
    <property type="term" value="C:mitochondrion"/>
    <property type="evidence" value="ECO:0007005"/>
    <property type="project" value="MGI"/>
</dbReference>
<dbReference type="GO" id="GO:0003735">
    <property type="term" value="F:structural constituent of ribosome"/>
    <property type="evidence" value="ECO:0007669"/>
    <property type="project" value="InterPro"/>
</dbReference>
<dbReference type="GO" id="GO:0032543">
    <property type="term" value="P:mitochondrial translation"/>
    <property type="evidence" value="ECO:0000303"/>
    <property type="project" value="ComplexPortal"/>
</dbReference>
<dbReference type="CDD" id="cd00336">
    <property type="entry name" value="Ribosomal_L22"/>
    <property type="match status" value="1"/>
</dbReference>
<dbReference type="FunFam" id="3.90.470.10:FF:000009">
    <property type="entry name" value="39S ribosomal protein L22, mitochondrial"/>
    <property type="match status" value="1"/>
</dbReference>
<dbReference type="Gene3D" id="3.90.470.10">
    <property type="entry name" value="Ribosomal protein L22/L17"/>
    <property type="match status" value="1"/>
</dbReference>
<dbReference type="InterPro" id="IPR001063">
    <property type="entry name" value="Ribosomal_uL22"/>
</dbReference>
<dbReference type="InterPro" id="IPR047867">
    <property type="entry name" value="Ribosomal_uL22_bac/org-type"/>
</dbReference>
<dbReference type="InterPro" id="IPR036394">
    <property type="entry name" value="Ribosomal_uL22_sf"/>
</dbReference>
<dbReference type="PANTHER" id="PTHR13501">
    <property type="entry name" value="CHLOROPLAST 50S RIBOSOMAL PROTEIN L22-RELATED"/>
    <property type="match status" value="1"/>
</dbReference>
<dbReference type="PANTHER" id="PTHR13501:SF8">
    <property type="entry name" value="LARGE RIBOSOMAL SUBUNIT PROTEIN UL22M"/>
    <property type="match status" value="1"/>
</dbReference>
<dbReference type="Pfam" id="PF00237">
    <property type="entry name" value="Ribosomal_L22"/>
    <property type="match status" value="1"/>
</dbReference>
<dbReference type="SUPFAM" id="SSF54843">
    <property type="entry name" value="Ribosomal protein L22"/>
    <property type="match status" value="1"/>
</dbReference>
<accession>Q8BU88</accession>
<accession>Q8BK04</accession>
<proteinExistence type="evidence at protein level"/>
<comment type="subunit">
    <text evidence="2">Component of the mitochondrial ribosome large subunit (39S) which comprises a 16S rRNA and about 50 distinct proteins.</text>
</comment>
<comment type="subcellular location">
    <subcellularLocation>
        <location evidence="2">Mitochondrion</location>
    </subcellularLocation>
</comment>
<comment type="similarity">
    <text evidence="3">Belongs to the universal ribosomal protein uL22 family.</text>
</comment>
<evidence type="ECO:0000250" key="1"/>
<evidence type="ECO:0000250" key="2">
    <source>
        <dbReference type="UniProtKB" id="Q9NWU5"/>
    </source>
</evidence>
<evidence type="ECO:0000305" key="3"/>
<protein>
    <recommendedName>
        <fullName evidence="3">Large ribosomal subunit protein uL22m</fullName>
    </recommendedName>
    <alternativeName>
        <fullName>39S ribosomal protein L22, mitochondrial</fullName>
        <shortName>L22mt</shortName>
        <shortName>MRP-L22</shortName>
    </alternativeName>
</protein>
<sequence>MAAALLRELGALRVPNLRIWATQTLRVLPPSCIHTSASLDISRKWEKKNKIVYPPQLPGEPRRPAEIYHCRRQIKYSKDKMWYLAKMIRGMSIDQALAQLEFNDKKGAQIIKEVLLEAQDMAVRDHNVEFRSNLHIAESTSGRGQCLKRIRYHGRGRFGIMEKVYCHYFVKLVEGPPPPPEVPKTAVDHAKDYIQQLRSRTIIHTL</sequence>
<feature type="transit peptide" description="Mitochondrion" evidence="1">
    <location>
        <begin position="1"/>
        <end position="40"/>
    </location>
</feature>
<feature type="chain" id="PRO_0000261645" description="Large ribosomal subunit protein uL22m">
    <location>
        <begin position="41"/>
        <end position="206"/>
    </location>
</feature>
<feature type="sequence conflict" description="In Ref. 1; BAC36901." evidence="3" ref="1">
    <original>R</original>
    <variation>P</variation>
    <location>
        <position position="198"/>
    </location>
</feature>